<dbReference type="EC" id="2.1.1.166" evidence="1"/>
<dbReference type="EMBL" id="CP000247">
    <property type="protein sequence ID" value="ABG71248.1"/>
    <property type="molecule type" value="Genomic_DNA"/>
</dbReference>
<dbReference type="RefSeq" id="WP_000145975.1">
    <property type="nucleotide sequence ID" value="NC_008253.1"/>
</dbReference>
<dbReference type="SMR" id="Q0TCT1"/>
<dbReference type="GeneID" id="93778802"/>
<dbReference type="KEGG" id="ecp:ECP_3266"/>
<dbReference type="HOGENOM" id="CLU_009422_4_0_6"/>
<dbReference type="Proteomes" id="UP000009182">
    <property type="component" value="Chromosome"/>
</dbReference>
<dbReference type="GO" id="GO:0005737">
    <property type="term" value="C:cytoplasm"/>
    <property type="evidence" value="ECO:0007669"/>
    <property type="project" value="UniProtKB-SubCell"/>
</dbReference>
<dbReference type="GO" id="GO:0008650">
    <property type="term" value="F:rRNA (uridine-2'-O-)-methyltransferase activity"/>
    <property type="evidence" value="ECO:0007669"/>
    <property type="project" value="UniProtKB-UniRule"/>
</dbReference>
<dbReference type="CDD" id="cd02440">
    <property type="entry name" value="AdoMet_MTases"/>
    <property type="match status" value="1"/>
</dbReference>
<dbReference type="FunFam" id="3.40.50.150:FF:000005">
    <property type="entry name" value="Ribosomal RNA large subunit methyltransferase E"/>
    <property type="match status" value="1"/>
</dbReference>
<dbReference type="Gene3D" id="3.40.50.150">
    <property type="entry name" value="Vaccinia Virus protein VP39"/>
    <property type="match status" value="1"/>
</dbReference>
<dbReference type="HAMAP" id="MF_01547">
    <property type="entry name" value="RNA_methyltr_E"/>
    <property type="match status" value="1"/>
</dbReference>
<dbReference type="InterPro" id="IPR050082">
    <property type="entry name" value="RNA_methyltr_RlmE"/>
</dbReference>
<dbReference type="InterPro" id="IPR002877">
    <property type="entry name" value="RNA_MeTrfase_FtsJ_dom"/>
</dbReference>
<dbReference type="InterPro" id="IPR015507">
    <property type="entry name" value="rRNA-MeTfrase_E"/>
</dbReference>
<dbReference type="InterPro" id="IPR004512">
    <property type="entry name" value="rRNA_MeTrfase_gammaproteobac"/>
</dbReference>
<dbReference type="InterPro" id="IPR029063">
    <property type="entry name" value="SAM-dependent_MTases_sf"/>
</dbReference>
<dbReference type="NCBIfam" id="NF008390">
    <property type="entry name" value="PRK11188.1"/>
    <property type="match status" value="1"/>
</dbReference>
<dbReference type="NCBIfam" id="TIGR00438">
    <property type="entry name" value="rrmJ"/>
    <property type="match status" value="1"/>
</dbReference>
<dbReference type="PANTHER" id="PTHR10920">
    <property type="entry name" value="RIBOSOMAL RNA METHYLTRANSFERASE"/>
    <property type="match status" value="1"/>
</dbReference>
<dbReference type="PANTHER" id="PTHR10920:SF18">
    <property type="entry name" value="RRNA METHYLTRANSFERASE 2, MITOCHONDRIAL"/>
    <property type="match status" value="1"/>
</dbReference>
<dbReference type="Pfam" id="PF01728">
    <property type="entry name" value="FtsJ"/>
    <property type="match status" value="1"/>
</dbReference>
<dbReference type="PIRSF" id="PIRSF005461">
    <property type="entry name" value="23S_rRNA_mtase"/>
    <property type="match status" value="1"/>
</dbReference>
<dbReference type="SUPFAM" id="SSF53335">
    <property type="entry name" value="S-adenosyl-L-methionine-dependent methyltransferases"/>
    <property type="match status" value="1"/>
</dbReference>
<reference key="1">
    <citation type="journal article" date="2006" name="Mol. Microbiol.">
        <title>Role of pathogenicity island-associated integrases in the genome plasticity of uropathogenic Escherichia coli strain 536.</title>
        <authorList>
            <person name="Hochhut B."/>
            <person name="Wilde C."/>
            <person name="Balling G."/>
            <person name="Middendorf B."/>
            <person name="Dobrindt U."/>
            <person name="Brzuszkiewicz E."/>
            <person name="Gottschalk G."/>
            <person name="Carniel E."/>
            <person name="Hacker J."/>
        </authorList>
    </citation>
    <scope>NUCLEOTIDE SEQUENCE [LARGE SCALE GENOMIC DNA]</scope>
    <source>
        <strain>536 / UPEC</strain>
    </source>
</reference>
<comment type="function">
    <text evidence="1">Specifically methylates the uridine in position 2552 of 23S rRNA at the 2'-O position of the ribose in the fully assembled 50S ribosomal subunit.</text>
</comment>
<comment type="catalytic activity">
    <reaction evidence="1">
        <text>uridine(2552) in 23S rRNA + S-adenosyl-L-methionine = 2'-O-methyluridine(2552) in 23S rRNA + S-adenosyl-L-homocysteine + H(+)</text>
        <dbReference type="Rhea" id="RHEA:42720"/>
        <dbReference type="Rhea" id="RHEA-COMP:10202"/>
        <dbReference type="Rhea" id="RHEA-COMP:10203"/>
        <dbReference type="ChEBI" id="CHEBI:15378"/>
        <dbReference type="ChEBI" id="CHEBI:57856"/>
        <dbReference type="ChEBI" id="CHEBI:59789"/>
        <dbReference type="ChEBI" id="CHEBI:65315"/>
        <dbReference type="ChEBI" id="CHEBI:74478"/>
        <dbReference type="EC" id="2.1.1.166"/>
    </reaction>
</comment>
<comment type="subcellular location">
    <subcellularLocation>
        <location evidence="1">Cytoplasm</location>
    </subcellularLocation>
</comment>
<comment type="similarity">
    <text evidence="1">Belongs to the class I-like SAM-binding methyltransferase superfamily. RNA methyltransferase RlmE family.</text>
</comment>
<sequence>MTGKKRSASSSRWLQEHFSDKYVQQAQKKGLRSRAWFKLDEIQQSDKLFKPGMTVVDLGAAPGGWSQYVVTQIGGKGRIIACDLLPMDPIVGVDFLQGDFRDELVMKALLERVGDSKVQVVMSDMAPNMSGTPAVDIPRAMYLVELALEMCRDVLAPGGSFVVKVFQGEGFDEYLREIRSLFTKVKVRKPDSSRARSREVYIVATGRKP</sequence>
<keyword id="KW-0963">Cytoplasm</keyword>
<keyword id="KW-0489">Methyltransferase</keyword>
<keyword id="KW-0698">rRNA processing</keyword>
<keyword id="KW-0949">S-adenosyl-L-methionine</keyword>
<keyword id="KW-0808">Transferase</keyword>
<gene>
    <name evidence="1" type="primary">rlmE</name>
    <name evidence="1" type="synonym">ftsJ</name>
    <name evidence="1" type="synonym">rrmJ</name>
    <name type="ordered locus">ECP_3266</name>
</gene>
<name>RLME_ECOL5</name>
<proteinExistence type="inferred from homology"/>
<accession>Q0TCT1</accession>
<feature type="chain" id="PRO_0000282745" description="Ribosomal RNA large subunit methyltransferase E">
    <location>
        <begin position="1"/>
        <end position="209"/>
    </location>
</feature>
<feature type="active site" description="Proton acceptor" evidence="1">
    <location>
        <position position="164"/>
    </location>
</feature>
<feature type="binding site" evidence="1">
    <location>
        <position position="63"/>
    </location>
    <ligand>
        <name>S-adenosyl-L-methionine</name>
        <dbReference type="ChEBI" id="CHEBI:59789"/>
    </ligand>
</feature>
<feature type="binding site" evidence="1">
    <location>
        <position position="65"/>
    </location>
    <ligand>
        <name>S-adenosyl-L-methionine</name>
        <dbReference type="ChEBI" id="CHEBI:59789"/>
    </ligand>
</feature>
<feature type="binding site" evidence="1">
    <location>
        <position position="83"/>
    </location>
    <ligand>
        <name>S-adenosyl-L-methionine</name>
        <dbReference type="ChEBI" id="CHEBI:59789"/>
    </ligand>
</feature>
<feature type="binding site" evidence="1">
    <location>
        <position position="99"/>
    </location>
    <ligand>
        <name>S-adenosyl-L-methionine</name>
        <dbReference type="ChEBI" id="CHEBI:59789"/>
    </ligand>
</feature>
<feature type="binding site" evidence="1">
    <location>
        <position position="124"/>
    </location>
    <ligand>
        <name>S-adenosyl-L-methionine</name>
        <dbReference type="ChEBI" id="CHEBI:59789"/>
    </ligand>
</feature>
<evidence type="ECO:0000255" key="1">
    <source>
        <dbReference type="HAMAP-Rule" id="MF_01547"/>
    </source>
</evidence>
<protein>
    <recommendedName>
        <fullName evidence="1">Ribosomal RNA large subunit methyltransferase E</fullName>
        <ecNumber evidence="1">2.1.1.166</ecNumber>
    </recommendedName>
    <alternativeName>
        <fullName evidence="1">23S rRNA Um2552 methyltransferase</fullName>
    </alternativeName>
    <alternativeName>
        <fullName evidence="1">rRNA (uridine-2'-O-)-methyltransferase</fullName>
    </alternativeName>
</protein>
<organism>
    <name type="scientific">Escherichia coli O6:K15:H31 (strain 536 / UPEC)</name>
    <dbReference type="NCBI Taxonomy" id="362663"/>
    <lineage>
        <taxon>Bacteria</taxon>
        <taxon>Pseudomonadati</taxon>
        <taxon>Pseudomonadota</taxon>
        <taxon>Gammaproteobacteria</taxon>
        <taxon>Enterobacterales</taxon>
        <taxon>Enterobacteriaceae</taxon>
        <taxon>Escherichia</taxon>
    </lineage>
</organism>